<keyword id="KW-0030">Aminoacyl-tRNA synthetase</keyword>
<keyword id="KW-0067">ATP-binding</keyword>
<keyword id="KW-0963">Cytoplasm</keyword>
<keyword id="KW-0436">Ligase</keyword>
<keyword id="KW-0547">Nucleotide-binding</keyword>
<keyword id="KW-0648">Protein biosynthesis</keyword>
<keyword id="KW-1185">Reference proteome</keyword>
<reference key="1">
    <citation type="journal article" date="2004" name="Nat. Biotechnol.">
        <title>The genome sequence of the anaerobic, sulfate-reducing bacterium Desulfovibrio vulgaris Hildenborough.</title>
        <authorList>
            <person name="Heidelberg J.F."/>
            <person name="Seshadri R."/>
            <person name="Haveman S.A."/>
            <person name="Hemme C.L."/>
            <person name="Paulsen I.T."/>
            <person name="Kolonay J.F."/>
            <person name="Eisen J.A."/>
            <person name="Ward N.L."/>
            <person name="Methe B.A."/>
            <person name="Brinkac L.M."/>
            <person name="Daugherty S.C."/>
            <person name="DeBoy R.T."/>
            <person name="Dodson R.J."/>
            <person name="Durkin A.S."/>
            <person name="Madupu R."/>
            <person name="Nelson W.C."/>
            <person name="Sullivan S.A."/>
            <person name="Fouts D.E."/>
            <person name="Haft D.H."/>
            <person name="Selengut J."/>
            <person name="Peterson J.D."/>
            <person name="Davidsen T.M."/>
            <person name="Zafar N."/>
            <person name="Zhou L."/>
            <person name="Radune D."/>
            <person name="Dimitrov G."/>
            <person name="Hance M."/>
            <person name="Tran K."/>
            <person name="Khouri H.M."/>
            <person name="Gill J."/>
            <person name="Utterback T.R."/>
            <person name="Feldblyum T.V."/>
            <person name="Wall J.D."/>
            <person name="Voordouw G."/>
            <person name="Fraser C.M."/>
        </authorList>
    </citation>
    <scope>NUCLEOTIDE SEQUENCE [LARGE SCALE GENOMIC DNA]</scope>
    <source>
        <strain>ATCC 29579 / DSM 644 / CCUG 34227 / NCIMB 8303 / VKM B-1760 / Hildenborough</strain>
    </source>
</reference>
<dbReference type="EC" id="6.1.1.19" evidence="1"/>
<dbReference type="EMBL" id="AE017285">
    <property type="protein sequence ID" value="AAS95726.1"/>
    <property type="molecule type" value="Genomic_DNA"/>
</dbReference>
<dbReference type="RefSeq" id="WP_010938544.1">
    <property type="nucleotide sequence ID" value="NC_002937.3"/>
</dbReference>
<dbReference type="RefSeq" id="YP_010467.1">
    <property type="nucleotide sequence ID" value="NC_002937.3"/>
</dbReference>
<dbReference type="SMR" id="Q72CN5"/>
<dbReference type="STRING" id="882.DVU_1248"/>
<dbReference type="PaxDb" id="882-DVU_1248"/>
<dbReference type="EnsemblBacteria" id="AAS95726">
    <property type="protein sequence ID" value="AAS95726"/>
    <property type="gene ID" value="DVU_1248"/>
</dbReference>
<dbReference type="KEGG" id="dvu:DVU_1248"/>
<dbReference type="PATRIC" id="fig|882.5.peg.1167"/>
<dbReference type="eggNOG" id="COG0018">
    <property type="taxonomic scope" value="Bacteria"/>
</dbReference>
<dbReference type="HOGENOM" id="CLU_006406_0_1_7"/>
<dbReference type="OrthoDB" id="9803211at2"/>
<dbReference type="PhylomeDB" id="Q72CN5"/>
<dbReference type="Proteomes" id="UP000002194">
    <property type="component" value="Chromosome"/>
</dbReference>
<dbReference type="GO" id="GO:0005737">
    <property type="term" value="C:cytoplasm"/>
    <property type="evidence" value="ECO:0007669"/>
    <property type="project" value="UniProtKB-SubCell"/>
</dbReference>
<dbReference type="GO" id="GO:0004814">
    <property type="term" value="F:arginine-tRNA ligase activity"/>
    <property type="evidence" value="ECO:0007669"/>
    <property type="project" value="UniProtKB-UniRule"/>
</dbReference>
<dbReference type="GO" id="GO:0005524">
    <property type="term" value="F:ATP binding"/>
    <property type="evidence" value="ECO:0007669"/>
    <property type="project" value="UniProtKB-UniRule"/>
</dbReference>
<dbReference type="GO" id="GO:0006420">
    <property type="term" value="P:arginyl-tRNA aminoacylation"/>
    <property type="evidence" value="ECO:0007669"/>
    <property type="project" value="UniProtKB-UniRule"/>
</dbReference>
<dbReference type="CDD" id="cd00671">
    <property type="entry name" value="ArgRS_core"/>
    <property type="match status" value="1"/>
</dbReference>
<dbReference type="FunFam" id="1.10.730.10:FF:000008">
    <property type="entry name" value="Arginine--tRNA ligase"/>
    <property type="match status" value="1"/>
</dbReference>
<dbReference type="FunFam" id="3.40.50.620:FF:000062">
    <property type="entry name" value="Arginine--tRNA ligase"/>
    <property type="match status" value="1"/>
</dbReference>
<dbReference type="Gene3D" id="3.30.1360.70">
    <property type="entry name" value="Arginyl tRNA synthetase N-terminal domain"/>
    <property type="match status" value="1"/>
</dbReference>
<dbReference type="Gene3D" id="3.40.50.620">
    <property type="entry name" value="HUPs"/>
    <property type="match status" value="1"/>
</dbReference>
<dbReference type="Gene3D" id="1.10.730.10">
    <property type="entry name" value="Isoleucyl-tRNA Synthetase, Domain 1"/>
    <property type="match status" value="1"/>
</dbReference>
<dbReference type="HAMAP" id="MF_00123">
    <property type="entry name" value="Arg_tRNA_synth"/>
    <property type="match status" value="1"/>
</dbReference>
<dbReference type="InterPro" id="IPR001412">
    <property type="entry name" value="aa-tRNA-synth_I_CS"/>
</dbReference>
<dbReference type="InterPro" id="IPR001278">
    <property type="entry name" value="Arg-tRNA-ligase"/>
</dbReference>
<dbReference type="InterPro" id="IPR005148">
    <property type="entry name" value="Arg-tRNA-synth_N"/>
</dbReference>
<dbReference type="InterPro" id="IPR036695">
    <property type="entry name" value="Arg-tRNA-synth_N_sf"/>
</dbReference>
<dbReference type="InterPro" id="IPR035684">
    <property type="entry name" value="ArgRS_core"/>
</dbReference>
<dbReference type="InterPro" id="IPR008909">
    <property type="entry name" value="DALR_anticod-bd"/>
</dbReference>
<dbReference type="InterPro" id="IPR014729">
    <property type="entry name" value="Rossmann-like_a/b/a_fold"/>
</dbReference>
<dbReference type="InterPro" id="IPR009080">
    <property type="entry name" value="tRNAsynth_Ia_anticodon-bd"/>
</dbReference>
<dbReference type="NCBIfam" id="TIGR00456">
    <property type="entry name" value="argS"/>
    <property type="match status" value="1"/>
</dbReference>
<dbReference type="PANTHER" id="PTHR11956:SF5">
    <property type="entry name" value="ARGININE--TRNA LIGASE, CYTOPLASMIC"/>
    <property type="match status" value="1"/>
</dbReference>
<dbReference type="PANTHER" id="PTHR11956">
    <property type="entry name" value="ARGINYL-TRNA SYNTHETASE"/>
    <property type="match status" value="1"/>
</dbReference>
<dbReference type="Pfam" id="PF03485">
    <property type="entry name" value="Arg_tRNA_synt_N"/>
    <property type="match status" value="1"/>
</dbReference>
<dbReference type="Pfam" id="PF05746">
    <property type="entry name" value="DALR_1"/>
    <property type="match status" value="1"/>
</dbReference>
<dbReference type="Pfam" id="PF00750">
    <property type="entry name" value="tRNA-synt_1d"/>
    <property type="match status" value="1"/>
</dbReference>
<dbReference type="PRINTS" id="PR01038">
    <property type="entry name" value="TRNASYNTHARG"/>
</dbReference>
<dbReference type="SMART" id="SM01016">
    <property type="entry name" value="Arg_tRNA_synt_N"/>
    <property type="match status" value="1"/>
</dbReference>
<dbReference type="SMART" id="SM00836">
    <property type="entry name" value="DALR_1"/>
    <property type="match status" value="1"/>
</dbReference>
<dbReference type="SUPFAM" id="SSF47323">
    <property type="entry name" value="Anticodon-binding domain of a subclass of class I aminoacyl-tRNA synthetases"/>
    <property type="match status" value="1"/>
</dbReference>
<dbReference type="SUPFAM" id="SSF55190">
    <property type="entry name" value="Arginyl-tRNA synthetase (ArgRS), N-terminal 'additional' domain"/>
    <property type="match status" value="1"/>
</dbReference>
<dbReference type="SUPFAM" id="SSF52374">
    <property type="entry name" value="Nucleotidylyl transferase"/>
    <property type="match status" value="1"/>
</dbReference>
<dbReference type="PROSITE" id="PS00178">
    <property type="entry name" value="AA_TRNA_LIGASE_I"/>
    <property type="match status" value="1"/>
</dbReference>
<name>SYR_NITV2</name>
<feature type="chain" id="PRO_0000242016" description="Arginine--tRNA ligase">
    <location>
        <begin position="1"/>
        <end position="551"/>
    </location>
</feature>
<feature type="short sequence motif" description="'HIGH' region">
    <location>
        <begin position="125"/>
        <end position="135"/>
    </location>
</feature>
<evidence type="ECO:0000255" key="1">
    <source>
        <dbReference type="HAMAP-Rule" id="MF_00123"/>
    </source>
</evidence>
<protein>
    <recommendedName>
        <fullName evidence="1">Arginine--tRNA ligase</fullName>
        <ecNumber evidence="1">6.1.1.19</ecNumber>
    </recommendedName>
    <alternativeName>
        <fullName evidence="1">Arginyl-tRNA synthetase</fullName>
        <shortName evidence="1">ArgRS</shortName>
    </alternativeName>
</protein>
<organism>
    <name type="scientific">Nitratidesulfovibrio vulgaris (strain ATCC 29579 / DSM 644 / CCUG 34227 / NCIMB 8303 / VKM B-1760 / Hildenborough)</name>
    <name type="common">Desulfovibrio vulgaris</name>
    <dbReference type="NCBI Taxonomy" id="882"/>
    <lineage>
        <taxon>Bacteria</taxon>
        <taxon>Pseudomonadati</taxon>
        <taxon>Thermodesulfobacteriota</taxon>
        <taxon>Desulfovibrionia</taxon>
        <taxon>Desulfovibrionales</taxon>
        <taxon>Desulfovibrionaceae</taxon>
        <taxon>Nitratidesulfovibrio</taxon>
    </lineage>
</organism>
<proteinExistence type="inferred from homology"/>
<comment type="catalytic activity">
    <reaction evidence="1">
        <text>tRNA(Arg) + L-arginine + ATP = L-arginyl-tRNA(Arg) + AMP + diphosphate</text>
        <dbReference type="Rhea" id="RHEA:20301"/>
        <dbReference type="Rhea" id="RHEA-COMP:9658"/>
        <dbReference type="Rhea" id="RHEA-COMP:9673"/>
        <dbReference type="ChEBI" id="CHEBI:30616"/>
        <dbReference type="ChEBI" id="CHEBI:32682"/>
        <dbReference type="ChEBI" id="CHEBI:33019"/>
        <dbReference type="ChEBI" id="CHEBI:78442"/>
        <dbReference type="ChEBI" id="CHEBI:78513"/>
        <dbReference type="ChEBI" id="CHEBI:456215"/>
        <dbReference type="EC" id="6.1.1.19"/>
    </reaction>
</comment>
<comment type="subunit">
    <text evidence="1">Monomer.</text>
</comment>
<comment type="subcellular location">
    <subcellularLocation>
        <location evidence="1">Cytoplasm</location>
    </subcellularLocation>
</comment>
<comment type="similarity">
    <text evidence="1">Belongs to the class-I aminoacyl-tRNA synthetase family.</text>
</comment>
<sequence length="551" mass="60510">MRAKKQLLAALQDIVKDMGLAWPEKATIDTPKATGFGDLAANIALVLAKQAGQNPRELATRIADALRNRDADITAIDIAGPGFLNVTYSQDFWRETILRAQEAGSAFGSSDTGAGRKVQVEYVSANPTGPLHIGHGRGAAVGDSLARIMRFAGYDVSTEYYINDAGRQMRLLGLSVWVRAKELAGRPVTLPEDFYRGDYIKDIARELMEKEPGLLDLDDAAGEDRCFAYAMSSILDGIKQDLADFRVEHQVWFSERSLVEGGAVEKTFNRLKEAGLAFEQDGALWFRTTDFGDDKDRVLRKSDGTLTYFSSDIAYHDNKYDRGFDLVVDIWGADHHGYIPRMRAAVAALGRKPEAFDVVLIQLVNLLRGGELVAMSTRAGQFETLADVVKETGADAARFMFLSRKSDSPLDFDLELVKQRTMDNPVYYVQYAHARVCSVLRKAAERGIEMPAQLDGASLAPLSGDDEMELLRLLDRFEETVAGAATALAPHHISHYLMEVAGALHSYYARQPILNATEQDVIVPRLALLRAVGCVLANGLSLLGVSAPESM</sequence>
<accession>Q72CN5</accession>
<gene>
    <name evidence="1" type="primary">argS</name>
    <name type="ordered locus">DVU_1248</name>
</gene>